<name>GCNT3_SHEEP</name>
<proteinExistence type="inferred from homology"/>
<dbReference type="EC" id="2.4.1.102" evidence="2"/>
<dbReference type="EC" id="2.4.1.148" evidence="2"/>
<dbReference type="EC" id="2.4.1.150" evidence="2"/>
<dbReference type="EMBL" id="AF465335">
    <property type="protein sequence ID" value="AAO22162.1"/>
    <property type="molecule type" value="Genomic_DNA"/>
</dbReference>
<dbReference type="SMR" id="Q866Z6"/>
<dbReference type="STRING" id="9940.ENSOARP00000000929"/>
<dbReference type="CAZy" id="GT14">
    <property type="family name" value="Glycosyltransferase Family 14"/>
</dbReference>
<dbReference type="GlyCosmos" id="Q866Z6">
    <property type="glycosylation" value="1 site, No reported glycans"/>
</dbReference>
<dbReference type="PaxDb" id="9940-ENSOARP00000000929"/>
<dbReference type="eggNOG" id="KOG0799">
    <property type="taxonomic scope" value="Eukaryota"/>
</dbReference>
<dbReference type="UniPathway" id="UPA00378"/>
<dbReference type="Proteomes" id="UP000002356">
    <property type="component" value="Unplaced"/>
</dbReference>
<dbReference type="GO" id="GO:0000139">
    <property type="term" value="C:Golgi membrane"/>
    <property type="evidence" value="ECO:0007669"/>
    <property type="project" value="UniProtKB-SubCell"/>
</dbReference>
<dbReference type="GO" id="GO:0047225">
    <property type="term" value="F:acetylgalactosaminyl-O-glycosyl-glycoprotein beta-1,6-N-acetylglucosaminyltransferase activity"/>
    <property type="evidence" value="ECO:0007669"/>
    <property type="project" value="UniProtKB-EC"/>
</dbReference>
<dbReference type="GO" id="GO:0003829">
    <property type="term" value="F:beta-1,3-galactosyl-O-glycosyl-glycoprotein beta-1,6-N-acetylglucosaminyltransferase activity"/>
    <property type="evidence" value="ECO:0007669"/>
    <property type="project" value="UniProtKB-EC"/>
</dbReference>
<dbReference type="GO" id="GO:0008109">
    <property type="term" value="F:N-acetyllactosaminide beta-1,6-N-acetylglucosaminyltransferase activity"/>
    <property type="evidence" value="ECO:0007669"/>
    <property type="project" value="UniProtKB-EC"/>
</dbReference>
<dbReference type="GO" id="GO:0006486">
    <property type="term" value="P:protein glycosylation"/>
    <property type="evidence" value="ECO:0007669"/>
    <property type="project" value="UniProtKB-UniPathway"/>
</dbReference>
<dbReference type="InterPro" id="IPR003406">
    <property type="entry name" value="Glyco_trans_14"/>
</dbReference>
<dbReference type="PANTHER" id="PTHR19297:SF81">
    <property type="entry name" value="BETA-1,3-GALACTOSYL-O-GLYCOSYL-GLYCOPROTEIN BETA-1,6-N-ACETYLGLUCOSAMINYLTRANSFERASE 3"/>
    <property type="match status" value="1"/>
</dbReference>
<dbReference type="PANTHER" id="PTHR19297">
    <property type="entry name" value="GLYCOSYLTRANSFERASE 14 FAMILY MEMBER"/>
    <property type="match status" value="1"/>
</dbReference>
<dbReference type="Pfam" id="PF02485">
    <property type="entry name" value="Branch"/>
    <property type="match status" value="1"/>
</dbReference>
<protein>
    <recommendedName>
        <fullName>Beta-1,3-galactosyl-O-glycosyl-glycoprotein beta-1,6-N-acetylglucosaminyltransferase 3</fullName>
        <ecNumber evidence="2">2.4.1.102</ecNumber>
        <ecNumber evidence="2">2.4.1.148</ecNumber>
        <ecNumber evidence="2">2.4.1.150</ecNumber>
    </recommendedName>
    <alternativeName>
        <fullName>C2GnT-mucin type</fullName>
        <shortName>C2GnT-M</shortName>
    </alternativeName>
</protein>
<accession>Q866Z6</accession>
<sequence length="440" mass="50860">MKMTGWKKKLCRGHHLWALGCYMLLAVVALRLSLRLKCDVDSLDLESRDFQSQRCRDVLYKNLKLPAKRSINCSGITRGDQEAVVQALLDNLEVKKKRLPFTDTYYLNITRDCEQFKAQRKFIQFPLSKEELDFPIAYSMVVHEKIENFERLLRAVYAPQNIYCVHVDVKSPETFKEAVKAIISCFPNVFMASKLVPVVYASWSRVQADLNCMEDLLQSSVPWKYLLNTCGTDFPIKTNAEMVLALKMLNGKNSMESEIPSEYKKTRWKYRYEVTDRLSLTSKMKDPPPDNLPVFTGNAYFVASRAFVQHVLENPKSQRLIEWVKDTYSPDEHLWATLQRAPWMPGSVPYHPKYHISDMTAIARLVKWQGHEGDVSMGAPYAPCSGIHQRAICIYGVGDLHWILQNHHLLANKFDPRVDDNVLQCLEEYLRHKAIYGTEL</sequence>
<gene>
    <name type="primary">GCNT3</name>
</gene>
<keyword id="KW-1015">Disulfide bond</keyword>
<keyword id="KW-0325">Glycoprotein</keyword>
<keyword id="KW-0328">Glycosyltransferase</keyword>
<keyword id="KW-0333">Golgi apparatus</keyword>
<keyword id="KW-0472">Membrane</keyword>
<keyword id="KW-1185">Reference proteome</keyword>
<keyword id="KW-0735">Signal-anchor</keyword>
<keyword id="KW-0808">Transferase</keyword>
<keyword id="KW-0812">Transmembrane</keyword>
<keyword id="KW-1133">Transmembrane helix</keyword>
<reference key="1">
    <citation type="journal article" date="2003" name="J. Virol.">
        <title>The core 2 beta-1,6-N-acetylglucosaminyltransferase-mucin encoded by bovine herpesvirus 4 was acquired from an ancestor of the African buffalo.</title>
        <authorList>
            <person name="Markine-Goriaynoff N."/>
            <person name="Georgin J.-P."/>
            <person name="Goltz M."/>
            <person name="Zimmermann W."/>
            <person name="Broll H."/>
            <person name="Wamwayi H.M."/>
            <person name="Pastoret P.-P."/>
            <person name="Sharp P.M."/>
            <person name="Vanderplasschen A."/>
        </authorList>
    </citation>
    <scope>NUCLEOTIDE SEQUENCE [GENOMIC DNA]</scope>
</reference>
<evidence type="ECO:0000250" key="1"/>
<evidence type="ECO:0000250" key="2">
    <source>
        <dbReference type="UniProtKB" id="O95395"/>
    </source>
</evidence>
<evidence type="ECO:0000255" key="3"/>
<evidence type="ECO:0000305" key="4"/>
<comment type="function">
    <text evidence="2">Glycosyltransferase that can synthesize all known mucin beta 6 N-acetylglucosaminides. Mediates core 2 and core 4 O-glycan branching, 2 important steps in mucin-type biosynthesis. Also has I-branching enzyme activity by converting linear into branched poly-N-acetyllactosaminoglycans, leading to introduce the blood group I antigen during embryonic development.</text>
</comment>
<comment type="catalytic activity">
    <reaction evidence="2">
        <text>a 3-O-[beta-D-galactosyl-(1-&gt;3)-N-acetyl-alpha-D-galactosaminyl]-L-seryl-[protein] + UDP-N-acetyl-alpha-D-glucosamine = 3-O-{beta-D-galactosyl-(1-&gt;3)-[N-acetyl-beta-D-glucosaminyl-(1-&gt;6)]-N-acetyl-alpha-D-galactosaminyl}-L-seryl-[protein] + UDP + H(+)</text>
        <dbReference type="Rhea" id="RHEA:56212"/>
        <dbReference type="Rhea" id="RHEA-COMP:13922"/>
        <dbReference type="Rhea" id="RHEA-COMP:14419"/>
        <dbReference type="ChEBI" id="CHEBI:15378"/>
        <dbReference type="ChEBI" id="CHEBI:57705"/>
        <dbReference type="ChEBI" id="CHEBI:58223"/>
        <dbReference type="ChEBI" id="CHEBI:137949"/>
        <dbReference type="ChEBI" id="CHEBI:139605"/>
        <dbReference type="EC" id="2.4.1.102"/>
    </reaction>
</comment>
<comment type="catalytic activity">
    <reaction evidence="2">
        <text>a 3-O-[beta-D-galactosyl-(1-&gt;3)-N-acetyl-alpha-D-galactosaminyl]-L-threonyl-[protein] + UDP-N-acetyl-alpha-D-glucosamine = a 3-O-{beta-D-galactosyl-(1-&gt;3)-[N-acetyl-beta-D-glucosaminyl-(1-&gt;6)]-N-acetyl-alpha-D-galactosaminyl}-L-threonyl-[protein] + UDP + H(+)</text>
        <dbReference type="Rhea" id="RHEA:56216"/>
        <dbReference type="Rhea" id="RHEA-COMP:13923"/>
        <dbReference type="Rhea" id="RHEA-COMP:14420"/>
        <dbReference type="ChEBI" id="CHEBI:15378"/>
        <dbReference type="ChEBI" id="CHEBI:57705"/>
        <dbReference type="ChEBI" id="CHEBI:58223"/>
        <dbReference type="ChEBI" id="CHEBI:137950"/>
        <dbReference type="ChEBI" id="CHEBI:139607"/>
        <dbReference type="EC" id="2.4.1.102"/>
    </reaction>
</comment>
<comment type="catalytic activity">
    <reaction evidence="2">
        <text>a beta-D-Gal-(1-&gt;4)-beta-D-GlcNAc-(1-&gt;3)-beta-D-Gal-(1-&gt;4)-beta-D-GlcNAc derivative + UDP-N-acetyl-alpha-D-glucosamine = a beta-D-Gal-(1-&gt;4)-beta-D-GlcNAc-(1-&gt;3)-[beta-D-GlcNAc-(1-&gt;6)]-beta-D-Gal-(1-&gt;4)-N-acetyl-beta-D-glucosaminyl derivative + UDP + H(+)</text>
        <dbReference type="Rhea" id="RHEA:54820"/>
        <dbReference type="ChEBI" id="CHEBI:15378"/>
        <dbReference type="ChEBI" id="CHEBI:57705"/>
        <dbReference type="ChEBI" id="CHEBI:58223"/>
        <dbReference type="ChEBI" id="CHEBI:138371"/>
        <dbReference type="ChEBI" id="CHEBI:138372"/>
        <dbReference type="EC" id="2.4.1.150"/>
    </reaction>
</comment>
<comment type="catalytic activity">
    <reaction evidence="2">
        <text>3-O-[N-acetyl-beta-D-glucosaminyl-(1-&gt;3)-N-acetyl-alpha-D-galactosaminyl]-L-seryl-[protein] + UDP-N-acetyl-alpha-D-glucosamine = 3-O-[N-acetyl-beta-D-glucosaminyl-(1-&gt;3)-[N-acetyl-beta-D-glucosaminyl-(1-&gt;6)]-N-acetyl-alpha-D-galactosaminyl]-L-seryl-[protein] + UDP + H(+)</text>
        <dbReference type="Rhea" id="RHEA:56188"/>
        <dbReference type="Rhea" id="RHEA-COMP:11691"/>
        <dbReference type="Rhea" id="RHEA-COMP:14412"/>
        <dbReference type="ChEBI" id="CHEBI:15378"/>
        <dbReference type="ChEBI" id="CHEBI:57705"/>
        <dbReference type="ChEBI" id="CHEBI:58223"/>
        <dbReference type="ChEBI" id="CHEBI:87079"/>
        <dbReference type="ChEBI" id="CHEBI:139581"/>
        <dbReference type="EC" id="2.4.1.148"/>
    </reaction>
</comment>
<comment type="catalytic activity">
    <reaction evidence="2">
        <text>a 3-O-[N-acetyl-beta-D-glucosaminyl-(1-&gt;3)-N-acetyl-alpha-D-galactosaminyl]-L-threonyl-[protein] + UDP-N-acetyl-alpha-D-glucosamine = 3-O-[N-acetyl-beta-D-glucosaminyl-(1-&gt;3)-[N-acetyl-beta-D-glucosaminyl-(1-&gt;6)]-N-acetyl-alpha-D-galactosaminyl]-L-threonyl-[protein] + UDP + H(+)</text>
        <dbReference type="Rhea" id="RHEA:56192"/>
        <dbReference type="Rhea" id="RHEA-COMP:11692"/>
        <dbReference type="Rhea" id="RHEA-COMP:14413"/>
        <dbReference type="ChEBI" id="CHEBI:15378"/>
        <dbReference type="ChEBI" id="CHEBI:57705"/>
        <dbReference type="ChEBI" id="CHEBI:58223"/>
        <dbReference type="ChEBI" id="CHEBI:87080"/>
        <dbReference type="ChEBI" id="CHEBI:139580"/>
        <dbReference type="EC" id="2.4.1.148"/>
    </reaction>
</comment>
<comment type="pathway">
    <text>Protein modification; protein glycosylation.</text>
</comment>
<comment type="subcellular location">
    <subcellularLocation>
        <location evidence="1">Golgi apparatus membrane</location>
        <topology evidence="1">Single-pass type II membrane protein</topology>
    </subcellularLocation>
</comment>
<comment type="PTM">
    <text evidence="1">N-glycosylated.</text>
</comment>
<comment type="similarity">
    <text evidence="4">Belongs to the glycosyltransferase 14 family.</text>
</comment>
<organism>
    <name type="scientific">Ovis aries</name>
    <name type="common">Sheep</name>
    <dbReference type="NCBI Taxonomy" id="9940"/>
    <lineage>
        <taxon>Eukaryota</taxon>
        <taxon>Metazoa</taxon>
        <taxon>Chordata</taxon>
        <taxon>Craniata</taxon>
        <taxon>Vertebrata</taxon>
        <taxon>Euteleostomi</taxon>
        <taxon>Mammalia</taxon>
        <taxon>Eutheria</taxon>
        <taxon>Laurasiatheria</taxon>
        <taxon>Artiodactyla</taxon>
        <taxon>Ruminantia</taxon>
        <taxon>Pecora</taxon>
        <taxon>Bovidae</taxon>
        <taxon>Caprinae</taxon>
        <taxon>Ovis</taxon>
    </lineage>
</organism>
<feature type="chain" id="PRO_0000288548" description="Beta-1,3-galactosyl-O-glycosyl-glycoprotein beta-1,6-N-acetylglucosaminyltransferase 3">
    <location>
        <begin position="1"/>
        <end position="440"/>
    </location>
</feature>
<feature type="topological domain" description="Cytoplasmic" evidence="3">
    <location>
        <begin position="1"/>
        <end position="12"/>
    </location>
</feature>
<feature type="transmembrane region" description="Helical; Signal-anchor for type II membrane protein" evidence="3">
    <location>
        <begin position="13"/>
        <end position="30"/>
    </location>
</feature>
<feature type="topological domain" description="Lumenal" evidence="3">
    <location>
        <begin position="31"/>
        <end position="440"/>
    </location>
</feature>
<feature type="glycosylation site" description="N-linked (GlcNAc...) asparagine" evidence="3">
    <location>
        <position position="108"/>
    </location>
</feature>
<feature type="disulfide bond" evidence="1">
    <location>
        <begin position="73"/>
        <end position="230"/>
    </location>
</feature>
<feature type="disulfide bond" evidence="1">
    <location>
        <begin position="164"/>
        <end position="384"/>
    </location>
</feature>
<feature type="disulfide bond" evidence="1">
    <location>
        <begin position="185"/>
        <end position="212"/>
    </location>
</feature>
<feature type="disulfide bond" evidence="1">
    <location>
        <begin position="393"/>
        <end position="425"/>
    </location>
</feature>